<protein>
    <recommendedName>
        <fullName evidence="1">GMP synthase [glutamine-hydrolyzing]</fullName>
        <ecNumber evidence="1">6.3.5.2</ecNumber>
    </recommendedName>
    <alternativeName>
        <fullName evidence="1">GMP synthetase</fullName>
    </alternativeName>
    <alternativeName>
        <fullName evidence="1">Glutamine amidotransferase</fullName>
    </alternativeName>
</protein>
<proteinExistence type="inferred from homology"/>
<comment type="function">
    <text evidence="1">Catalyzes the synthesis of GMP from XMP.</text>
</comment>
<comment type="catalytic activity">
    <reaction evidence="1">
        <text>XMP + L-glutamine + ATP + H2O = GMP + L-glutamate + AMP + diphosphate + 2 H(+)</text>
        <dbReference type="Rhea" id="RHEA:11680"/>
        <dbReference type="ChEBI" id="CHEBI:15377"/>
        <dbReference type="ChEBI" id="CHEBI:15378"/>
        <dbReference type="ChEBI" id="CHEBI:29985"/>
        <dbReference type="ChEBI" id="CHEBI:30616"/>
        <dbReference type="ChEBI" id="CHEBI:33019"/>
        <dbReference type="ChEBI" id="CHEBI:57464"/>
        <dbReference type="ChEBI" id="CHEBI:58115"/>
        <dbReference type="ChEBI" id="CHEBI:58359"/>
        <dbReference type="ChEBI" id="CHEBI:456215"/>
        <dbReference type="EC" id="6.3.5.2"/>
    </reaction>
</comment>
<comment type="pathway">
    <text evidence="1">Purine metabolism; GMP biosynthesis; GMP from XMP (L-Gln route): step 1/1.</text>
</comment>
<comment type="subunit">
    <text evidence="1">Homodimer.</text>
</comment>
<gene>
    <name evidence="1" type="primary">guaA</name>
    <name type="ordered locus">HPSH_05360</name>
</gene>
<reference key="1">
    <citation type="submission" date="2008-05" db="EMBL/GenBank/DDBJ databases">
        <title>Genome sequence of Helicobacter pylori from the remote Amazon: traces of Asian ancestry of the first Americans.</title>
        <authorList>
            <person name="Kersulyte D."/>
            <person name="Kalia A."/>
            <person name="Gilman R.H."/>
            <person name="Berg D.E."/>
        </authorList>
    </citation>
    <scope>NUCLEOTIDE SEQUENCE [LARGE SCALE GENOMIC DNA]</scope>
    <source>
        <strain>Shi470</strain>
    </source>
</reference>
<sequence>MILVLDFGSQYTQLIARRLRESGIYAEIVPFFESIENIQKKAPKGLILSGGPASVYAKDAYKPSKKIFDLDLPILGICYGMQYLVDFFGGVVACTNEQEFGKAILEITQDSVIFEGVKIKSLVWMSHMDKVIELPKGFTTLAKSPNSPHCAIENAKIFGLQFHPEVIQSEEGGKILENFALLVCGCEKTWGMQHFAQKEMARLKEKIANAKVLCAVSGGVDSTVVATLLHRAIKDNLIAVFVDHGLLRKNEKEKVQAMFKDLQIPLNTIDAKEIFLSKLKGVSEPELKRKIIGETFIEAFEKEAKKHHLKGKIEFLAQGTLYPDVIESVSVKGPSKVIKTHHNVGGLPEWMDFKLIEPLRELFKDEVRLLGKELGISQDFLMRHPFPGPGLAIRILGEVSESKIRCLQEADFIFIEELKKANLYDKVWQAFCVLLNVNSVGVMGDNRTYENAICLRAVNASDGMTASFSFLEHSFLEKVSNRITNEVSGINRVVYDITSKPPGTIEWE</sequence>
<evidence type="ECO:0000255" key="1">
    <source>
        <dbReference type="HAMAP-Rule" id="MF_00344"/>
    </source>
</evidence>
<keyword id="KW-0067">ATP-binding</keyword>
<keyword id="KW-0315">Glutamine amidotransferase</keyword>
<keyword id="KW-0332">GMP biosynthesis</keyword>
<keyword id="KW-0436">Ligase</keyword>
<keyword id="KW-0547">Nucleotide-binding</keyword>
<keyword id="KW-0658">Purine biosynthesis</keyword>
<dbReference type="EC" id="6.3.5.2" evidence="1"/>
<dbReference type="EMBL" id="CP001072">
    <property type="protein sequence ID" value="ACD48483.1"/>
    <property type="molecule type" value="Genomic_DNA"/>
</dbReference>
<dbReference type="RefSeq" id="WP_000604638.1">
    <property type="nucleotide sequence ID" value="NC_010698.2"/>
</dbReference>
<dbReference type="SMR" id="B2UUF1"/>
<dbReference type="MEROPS" id="C26.957"/>
<dbReference type="KEGG" id="hps:HPSH_05360"/>
<dbReference type="HOGENOM" id="CLU_014340_0_5_7"/>
<dbReference type="UniPathway" id="UPA00189">
    <property type="reaction ID" value="UER00296"/>
</dbReference>
<dbReference type="GO" id="GO:0005829">
    <property type="term" value="C:cytosol"/>
    <property type="evidence" value="ECO:0007669"/>
    <property type="project" value="TreeGrafter"/>
</dbReference>
<dbReference type="GO" id="GO:0005524">
    <property type="term" value="F:ATP binding"/>
    <property type="evidence" value="ECO:0007669"/>
    <property type="project" value="UniProtKB-UniRule"/>
</dbReference>
<dbReference type="GO" id="GO:0003921">
    <property type="term" value="F:GMP synthase activity"/>
    <property type="evidence" value="ECO:0007669"/>
    <property type="project" value="InterPro"/>
</dbReference>
<dbReference type="CDD" id="cd01742">
    <property type="entry name" value="GATase1_GMP_Synthase"/>
    <property type="match status" value="1"/>
</dbReference>
<dbReference type="CDD" id="cd01997">
    <property type="entry name" value="GMP_synthase_C"/>
    <property type="match status" value="1"/>
</dbReference>
<dbReference type="FunFam" id="3.30.300.10:FF:000002">
    <property type="entry name" value="GMP synthase [glutamine-hydrolyzing]"/>
    <property type="match status" value="1"/>
</dbReference>
<dbReference type="FunFam" id="3.40.50.620:FF:000001">
    <property type="entry name" value="GMP synthase [glutamine-hydrolyzing]"/>
    <property type="match status" value="1"/>
</dbReference>
<dbReference type="FunFam" id="3.40.50.880:FF:000001">
    <property type="entry name" value="GMP synthase [glutamine-hydrolyzing]"/>
    <property type="match status" value="1"/>
</dbReference>
<dbReference type="Gene3D" id="3.30.300.10">
    <property type="match status" value="1"/>
</dbReference>
<dbReference type="Gene3D" id="3.40.50.880">
    <property type="match status" value="1"/>
</dbReference>
<dbReference type="Gene3D" id="3.40.50.620">
    <property type="entry name" value="HUPs"/>
    <property type="match status" value="1"/>
</dbReference>
<dbReference type="HAMAP" id="MF_00344">
    <property type="entry name" value="GMP_synthase"/>
    <property type="match status" value="1"/>
</dbReference>
<dbReference type="InterPro" id="IPR029062">
    <property type="entry name" value="Class_I_gatase-like"/>
</dbReference>
<dbReference type="InterPro" id="IPR017926">
    <property type="entry name" value="GATASE"/>
</dbReference>
<dbReference type="InterPro" id="IPR001674">
    <property type="entry name" value="GMP_synth_C"/>
</dbReference>
<dbReference type="InterPro" id="IPR004739">
    <property type="entry name" value="GMP_synth_GATase"/>
</dbReference>
<dbReference type="InterPro" id="IPR022955">
    <property type="entry name" value="GMP_synthase"/>
</dbReference>
<dbReference type="InterPro" id="IPR025777">
    <property type="entry name" value="GMPS_ATP_PPase_dom"/>
</dbReference>
<dbReference type="InterPro" id="IPR022310">
    <property type="entry name" value="NAD/GMP_synthase"/>
</dbReference>
<dbReference type="InterPro" id="IPR014729">
    <property type="entry name" value="Rossmann-like_a/b/a_fold"/>
</dbReference>
<dbReference type="NCBIfam" id="TIGR00884">
    <property type="entry name" value="guaA_Cterm"/>
    <property type="match status" value="1"/>
</dbReference>
<dbReference type="NCBIfam" id="TIGR00888">
    <property type="entry name" value="guaA_Nterm"/>
    <property type="match status" value="1"/>
</dbReference>
<dbReference type="NCBIfam" id="NF000848">
    <property type="entry name" value="PRK00074.1"/>
    <property type="match status" value="1"/>
</dbReference>
<dbReference type="PANTHER" id="PTHR11922:SF2">
    <property type="entry name" value="GMP SYNTHASE [GLUTAMINE-HYDROLYZING]"/>
    <property type="match status" value="1"/>
</dbReference>
<dbReference type="PANTHER" id="PTHR11922">
    <property type="entry name" value="GMP SYNTHASE-RELATED"/>
    <property type="match status" value="1"/>
</dbReference>
<dbReference type="Pfam" id="PF00117">
    <property type="entry name" value="GATase"/>
    <property type="match status" value="1"/>
</dbReference>
<dbReference type="Pfam" id="PF00958">
    <property type="entry name" value="GMP_synt_C"/>
    <property type="match status" value="1"/>
</dbReference>
<dbReference type="Pfam" id="PF02540">
    <property type="entry name" value="NAD_synthase"/>
    <property type="match status" value="1"/>
</dbReference>
<dbReference type="PRINTS" id="PR00097">
    <property type="entry name" value="ANTSNTHASEII"/>
</dbReference>
<dbReference type="PRINTS" id="PR00096">
    <property type="entry name" value="GATASE"/>
</dbReference>
<dbReference type="SUPFAM" id="SSF52402">
    <property type="entry name" value="Adenine nucleotide alpha hydrolases-like"/>
    <property type="match status" value="1"/>
</dbReference>
<dbReference type="SUPFAM" id="SSF52317">
    <property type="entry name" value="Class I glutamine amidotransferase-like"/>
    <property type="match status" value="1"/>
</dbReference>
<dbReference type="SUPFAM" id="SSF54810">
    <property type="entry name" value="GMP synthetase C-terminal dimerisation domain"/>
    <property type="match status" value="1"/>
</dbReference>
<dbReference type="PROSITE" id="PS51273">
    <property type="entry name" value="GATASE_TYPE_1"/>
    <property type="match status" value="1"/>
</dbReference>
<dbReference type="PROSITE" id="PS51553">
    <property type="entry name" value="GMPS_ATP_PPASE"/>
    <property type="match status" value="1"/>
</dbReference>
<accession>B2UUF1</accession>
<organism>
    <name type="scientific">Helicobacter pylori (strain Shi470)</name>
    <dbReference type="NCBI Taxonomy" id="512562"/>
    <lineage>
        <taxon>Bacteria</taxon>
        <taxon>Pseudomonadati</taxon>
        <taxon>Campylobacterota</taxon>
        <taxon>Epsilonproteobacteria</taxon>
        <taxon>Campylobacterales</taxon>
        <taxon>Helicobacteraceae</taxon>
        <taxon>Helicobacter</taxon>
    </lineage>
</organism>
<feature type="chain" id="PRO_1000120319" description="GMP synthase [glutamine-hydrolyzing]">
    <location>
        <begin position="1"/>
        <end position="508"/>
    </location>
</feature>
<feature type="domain" description="Glutamine amidotransferase type-1" evidence="1">
    <location>
        <begin position="1"/>
        <end position="189"/>
    </location>
</feature>
<feature type="domain" description="GMPS ATP-PPase" evidence="1">
    <location>
        <begin position="190"/>
        <end position="383"/>
    </location>
</feature>
<feature type="active site" description="Nucleophile" evidence="1">
    <location>
        <position position="78"/>
    </location>
</feature>
<feature type="active site" evidence="1">
    <location>
        <position position="163"/>
    </location>
</feature>
<feature type="active site" evidence="1">
    <location>
        <position position="165"/>
    </location>
</feature>
<feature type="binding site" evidence="1">
    <location>
        <begin position="217"/>
        <end position="223"/>
    </location>
    <ligand>
        <name>ATP</name>
        <dbReference type="ChEBI" id="CHEBI:30616"/>
    </ligand>
</feature>
<name>GUAA_HELPS</name>